<reference key="1">
    <citation type="journal article" date="1995" name="Plant Mol. Biol. Rep.">
        <title>The chloroplast genome of a chlorophyll a+c-containing alga, Odontella sinensis.</title>
        <authorList>
            <person name="Kowallik K.V."/>
            <person name="Stoebe B."/>
            <person name="Schaffran I."/>
            <person name="Kroth-Pancic P."/>
            <person name="Freier U."/>
        </authorList>
    </citation>
    <scope>NUCLEOTIDE SEQUENCE [LARGE SCALE GENOMIC DNA]</scope>
</reference>
<evidence type="ECO:0000250" key="1"/>
<evidence type="ECO:0000305" key="2"/>
<sequence>MVTDTISDMLTRIRNANMIKHQIVQIPATKMSKAITNILKEEGFIEDYEIYMENSYQFLLISLKYKGKSREPVICKMVRVSKPGLRVYSKSKKLPKVLDNLGIAIISTSKGVMTNLKAKELGIGGEVLCYIW</sequence>
<gene>
    <name type="primary">rps8</name>
</gene>
<name>RR8_TRICV</name>
<geneLocation type="chloroplast"/>
<proteinExistence type="inferred from homology"/>
<protein>
    <recommendedName>
        <fullName evidence="2">Small ribosomal subunit protein uS8c</fullName>
    </recommendedName>
    <alternativeName>
        <fullName>30S ribosomal protein S8, chloroplastic</fullName>
    </alternativeName>
</protein>
<dbReference type="EMBL" id="Z67753">
    <property type="protein sequence ID" value="CAA91635.1"/>
    <property type="molecule type" value="Genomic_DNA"/>
</dbReference>
<dbReference type="PIR" id="S78262">
    <property type="entry name" value="S78262"/>
</dbReference>
<dbReference type="RefSeq" id="NP_043603.1">
    <property type="nucleotide sequence ID" value="NC_001713.1"/>
</dbReference>
<dbReference type="SMR" id="P49496"/>
<dbReference type="GeneID" id="801804"/>
<dbReference type="GO" id="GO:0009507">
    <property type="term" value="C:chloroplast"/>
    <property type="evidence" value="ECO:0007669"/>
    <property type="project" value="UniProtKB-SubCell"/>
</dbReference>
<dbReference type="GO" id="GO:1990904">
    <property type="term" value="C:ribonucleoprotein complex"/>
    <property type="evidence" value="ECO:0007669"/>
    <property type="project" value="UniProtKB-KW"/>
</dbReference>
<dbReference type="GO" id="GO:0005840">
    <property type="term" value="C:ribosome"/>
    <property type="evidence" value="ECO:0007669"/>
    <property type="project" value="UniProtKB-KW"/>
</dbReference>
<dbReference type="GO" id="GO:0019843">
    <property type="term" value="F:rRNA binding"/>
    <property type="evidence" value="ECO:0007669"/>
    <property type="project" value="UniProtKB-UniRule"/>
</dbReference>
<dbReference type="GO" id="GO:0003735">
    <property type="term" value="F:structural constituent of ribosome"/>
    <property type="evidence" value="ECO:0007669"/>
    <property type="project" value="InterPro"/>
</dbReference>
<dbReference type="GO" id="GO:0006412">
    <property type="term" value="P:translation"/>
    <property type="evidence" value="ECO:0007669"/>
    <property type="project" value="UniProtKB-UniRule"/>
</dbReference>
<dbReference type="FunFam" id="3.30.1370.30:FF:000002">
    <property type="entry name" value="30S ribosomal protein S8"/>
    <property type="match status" value="1"/>
</dbReference>
<dbReference type="FunFam" id="3.30.1490.10:FF:000001">
    <property type="entry name" value="30S ribosomal protein S8"/>
    <property type="match status" value="1"/>
</dbReference>
<dbReference type="Gene3D" id="3.30.1370.30">
    <property type="match status" value="1"/>
</dbReference>
<dbReference type="Gene3D" id="3.30.1490.10">
    <property type="match status" value="1"/>
</dbReference>
<dbReference type="HAMAP" id="MF_01302_B">
    <property type="entry name" value="Ribosomal_uS8_B"/>
    <property type="match status" value="1"/>
</dbReference>
<dbReference type="InterPro" id="IPR000630">
    <property type="entry name" value="Ribosomal_uS8"/>
</dbReference>
<dbReference type="InterPro" id="IPR047863">
    <property type="entry name" value="Ribosomal_uS8_CS"/>
</dbReference>
<dbReference type="InterPro" id="IPR035987">
    <property type="entry name" value="Ribosomal_uS8_sf"/>
</dbReference>
<dbReference type="NCBIfam" id="NF001109">
    <property type="entry name" value="PRK00136.1"/>
    <property type="match status" value="1"/>
</dbReference>
<dbReference type="PANTHER" id="PTHR11758">
    <property type="entry name" value="40S RIBOSOMAL PROTEIN S15A"/>
    <property type="match status" value="1"/>
</dbReference>
<dbReference type="Pfam" id="PF00410">
    <property type="entry name" value="Ribosomal_S8"/>
    <property type="match status" value="1"/>
</dbReference>
<dbReference type="SUPFAM" id="SSF56047">
    <property type="entry name" value="Ribosomal protein S8"/>
    <property type="match status" value="1"/>
</dbReference>
<dbReference type="PROSITE" id="PS00053">
    <property type="entry name" value="RIBOSOMAL_S8"/>
    <property type="match status" value="1"/>
</dbReference>
<comment type="function">
    <text evidence="1">One of the primary rRNA binding proteins, it binds directly to 16S rRNA central domain where it helps coordinate assembly of the platform of the 30S subunit.</text>
</comment>
<comment type="subunit">
    <text evidence="1">Part of the 30S ribosomal subunit.</text>
</comment>
<comment type="subcellular location">
    <subcellularLocation>
        <location>Plastid</location>
        <location>Chloroplast</location>
    </subcellularLocation>
</comment>
<comment type="similarity">
    <text evidence="2">Belongs to the universal ribosomal protein uS8 family.</text>
</comment>
<keyword id="KW-0150">Chloroplast</keyword>
<keyword id="KW-0934">Plastid</keyword>
<keyword id="KW-0687">Ribonucleoprotein</keyword>
<keyword id="KW-0689">Ribosomal protein</keyword>
<keyword id="KW-0694">RNA-binding</keyword>
<keyword id="KW-0699">rRNA-binding</keyword>
<accession>P49496</accession>
<feature type="chain" id="PRO_0000126581" description="Small ribosomal subunit protein uS8c">
    <location>
        <begin position="1"/>
        <end position="132"/>
    </location>
</feature>
<organism>
    <name type="scientific">Trieres chinensis</name>
    <name type="common">Marine centric diatom</name>
    <name type="synonym">Odontella sinensis</name>
    <dbReference type="NCBI Taxonomy" id="1514140"/>
    <lineage>
        <taxon>Eukaryota</taxon>
        <taxon>Sar</taxon>
        <taxon>Stramenopiles</taxon>
        <taxon>Ochrophyta</taxon>
        <taxon>Bacillariophyta</taxon>
        <taxon>Mediophyceae</taxon>
        <taxon>Biddulphiophycidae</taxon>
        <taxon>Eupodiscales</taxon>
        <taxon>Parodontellaceae</taxon>
        <taxon>Trieres</taxon>
    </lineage>
</organism>